<protein>
    <recommendedName>
        <fullName>SKI family transcriptional corepressor 1</fullName>
    </recommendedName>
    <alternativeName>
        <fullName>Fussel-15 homolog</fullName>
    </alternativeName>
    <alternativeName>
        <fullName>Ladybird homeobox corepressor 1</fullName>
    </alternativeName>
    <alternativeName>
        <fullName>Lbx1 corepressor 1</fullName>
    </alternativeName>
    <alternativeName>
        <fullName>Transcriptional corepressor Corl1</fullName>
    </alternativeName>
</protein>
<comment type="function">
    <text evidence="1 4">Inhibits BMP signaling (By similarity). Acts as a transcriptional corepressor of LBX1.</text>
</comment>
<comment type="subunit">
    <text evidence="1 4">Interacts with SMAD1, SMAD2 and SMAD3 (By similarity). Interacts with LBX1.</text>
</comment>
<comment type="interaction">
    <interactant intactId="EBI-604451">
        <id>Q8BX46</id>
    </interactant>
    <interactant intactId="EBI-604594">
        <id>P52955</id>
        <label>Lbx1</label>
    </interactant>
    <organismsDiffer>false</organismsDiffer>
    <experiments>2</experiments>
</comment>
<comment type="subcellular location">
    <subcellularLocation>
        <location evidence="4">Nucleus</location>
    </subcellularLocation>
</comment>
<comment type="alternative products">
    <event type="alternative splicing"/>
    <isoform>
        <id>Q8BX46-1</id>
        <name evidence="9">1</name>
        <sequence type="displayed"/>
    </isoform>
    <isoform>
        <id>Q8BX46-2</id>
        <name evidence="4">2</name>
        <sequence type="described" ref="VSP_014179"/>
    </isoform>
</comment>
<comment type="tissue specificity">
    <text evidence="4 5">Expressed in brain with higher levels in embryo than adult. Expressed by migratory precursors of Purkinje cells in the postnatal brain. Also expressed in adult testis.</text>
</comment>
<comment type="developmental stage">
    <text evidence="4 5">Expressed in the developing cerebellum, pons, medulla oblongata and spinal cord. In embryonic brain, expressed in a subset of postmitotic neurons generated posterior to the midbrain-hindbrain border. In the developing spinal cord, selectively expressed in dorsal horn interneurons.</text>
</comment>
<comment type="similarity">
    <text evidence="2">Belongs to the SKI family.</text>
</comment>
<feature type="chain" id="PRO_0000129391" description="SKI family transcriptional corepressor 1">
    <location>
        <begin position="1"/>
        <end position="964"/>
    </location>
</feature>
<feature type="region of interest" description="Disordered" evidence="3">
    <location>
        <begin position="45"/>
        <end position="72"/>
    </location>
</feature>
<feature type="region of interest" description="Disordered" evidence="3">
    <location>
        <begin position="278"/>
        <end position="365"/>
    </location>
</feature>
<feature type="region of interest" description="Disordered" evidence="3">
    <location>
        <begin position="414"/>
        <end position="461"/>
    </location>
</feature>
<feature type="region of interest" description="Disordered" evidence="3">
    <location>
        <begin position="525"/>
        <end position="587"/>
    </location>
</feature>
<feature type="region of interest" description="Disordered" evidence="3">
    <location>
        <begin position="610"/>
        <end position="768"/>
    </location>
</feature>
<feature type="region of interest" description="Disordered" evidence="3">
    <location>
        <begin position="794"/>
        <end position="842"/>
    </location>
</feature>
<feature type="coiled-coil region" evidence="2">
    <location>
        <begin position="853"/>
        <end position="921"/>
    </location>
</feature>
<feature type="compositionally biased region" description="Gly residues" evidence="3">
    <location>
        <begin position="283"/>
        <end position="310"/>
    </location>
</feature>
<feature type="compositionally biased region" description="Low complexity" evidence="3">
    <location>
        <begin position="345"/>
        <end position="355"/>
    </location>
</feature>
<feature type="compositionally biased region" description="Gly residues" evidence="3">
    <location>
        <begin position="356"/>
        <end position="365"/>
    </location>
</feature>
<feature type="compositionally biased region" description="Gly residues" evidence="3">
    <location>
        <begin position="417"/>
        <end position="440"/>
    </location>
</feature>
<feature type="compositionally biased region" description="Pro residues" evidence="3">
    <location>
        <begin position="571"/>
        <end position="583"/>
    </location>
</feature>
<feature type="compositionally biased region" description="Acidic residues" evidence="3">
    <location>
        <begin position="652"/>
        <end position="661"/>
    </location>
</feature>
<feature type="compositionally biased region" description="Basic and acidic residues" evidence="3">
    <location>
        <begin position="798"/>
        <end position="808"/>
    </location>
</feature>
<feature type="compositionally biased region" description="Polar residues" evidence="3">
    <location>
        <begin position="823"/>
        <end position="834"/>
    </location>
</feature>
<feature type="splice variant" id="VSP_014179" description="In isoform 2." evidence="6 7 8">
    <location>
        <begin position="9"/>
        <end position="36"/>
    </location>
</feature>
<feature type="sequence conflict" description="In Ref. 2; BAE22308." evidence="9" ref="2">
    <location>
        <position position="934"/>
    </location>
</feature>
<feature type="sequence conflict" description="In Ref. 2; BAC33520." evidence="9" ref="2">
    <original>P</original>
    <variation>Q</variation>
    <location>
        <position position="961"/>
    </location>
</feature>
<evidence type="ECO:0000250" key="1"/>
<evidence type="ECO:0000255" key="2"/>
<evidence type="ECO:0000256" key="3">
    <source>
        <dbReference type="SAM" id="MobiDB-lite"/>
    </source>
</evidence>
<evidence type="ECO:0000269" key="4">
    <source>
    </source>
</evidence>
<evidence type="ECO:0000269" key="5">
    <source>
    </source>
</evidence>
<evidence type="ECO:0000303" key="6">
    <source>
    </source>
</evidence>
<evidence type="ECO:0000303" key="7">
    <source>
    </source>
</evidence>
<evidence type="ECO:0000303" key="8">
    <source>
    </source>
</evidence>
<evidence type="ECO:0000305" key="9"/>
<evidence type="ECO:0000312" key="10">
    <source>
        <dbReference type="EMBL" id="BAD69568.1"/>
    </source>
</evidence>
<sequence>MALLCGLGQVTLRLWVPLPFQSENRIGFLAAGAFLRSGGMEALTTQLGPGREGSSSPNSKQELQPYSGSSALKPNQVGETSLYGVPIVSLVIDGQERLCLAQISNTLLKNYSYNEIHNRRVALGITCVQCTPVQLEILRRAGAMPISSRRCGMITKREAERLCKSFLGEHKPPKLPENFAFDVVHECAWGSRGSFIPARYNSSRAKCIKCGYCSMYFSPNKFIFHSHRTPDAKYTQPDAANFNSWRRHLKLSDKSATDELSHAWEDVKAMFNGGTRKRTFSLQGGGGGGANSGSGGAGKGGAGGGGGPGCGSEMAPGPPPHKSLRCGEDEAAGPPGPPPPHPQRALGLAAAASGPAGPGGPGGSAGVRSYPVIPVPSKGFGLLQKLPPPLFPHPYGFPTAFGLCPKKDDPVLVAGEPKGGPGTGSSGGAGTAAGAGGPGAGHLPPGAGPGPGGGTMFWGHQPSGAAKDAAAVAAAAAAATVYPTFPMFWPAAGSLPVPPYPAAQSQAKAVAAAVAAAAAAAAAAAGGGGPESLDGAEPAKEGSLGTEERCPSALSRGPLDEDGADEALPPSLGPLPPPPPPPARKSSYVSAFRPVVKDAESIAKLYGSAREAYGSGPARGPVPGTGTGGGYVSPDFLSEGSSSYHSASPDVDTADEPEVDVESNRFPDEEGAQDDTEPRAPSTGGGPDGDQPAGPPSVTSSGADGPTDSADGDSPRPRRRLGPPPAIRSAFGDLVADDVVRRTERSPPSGGYELREPCGPLGGPGAAKVYAPERDEHVKSTAVAAALGPAASYLCTPETHEPDKEDNHSTTADDLETRKSFSDQRSVSQPSPANTDRGEDGLTLDVTGTQLVEKDIENLAREELQKLLLEQMELRKKLEREFQSLKDNFQDQMKRELAYREEMVQQLQIVRDTLCNELDQERKARYAIQQKLKEAHDALHHFSCKMLTPRHCTGNCSFKPPLLP</sequence>
<name>SKOR1_MOUSE</name>
<gene>
    <name type="primary">Skor1</name>
    <name evidence="10" type="synonym">Corl1</name>
    <name type="synonym">Lbxcor1</name>
</gene>
<dbReference type="EMBL" id="AB185113">
    <property type="protein sequence ID" value="BAD69568.1"/>
    <property type="molecule type" value="mRNA"/>
</dbReference>
<dbReference type="EMBL" id="AK049035">
    <property type="protein sequence ID" value="BAC33520.1"/>
    <property type="molecule type" value="mRNA"/>
</dbReference>
<dbReference type="EMBL" id="AK134840">
    <property type="protein sequence ID" value="BAE22308.1"/>
    <property type="molecule type" value="mRNA"/>
</dbReference>
<dbReference type="EMBL" id="BC138063">
    <property type="protein sequence ID" value="AAI38064.1"/>
    <property type="molecule type" value="mRNA"/>
</dbReference>
<dbReference type="CCDS" id="CCDS23268.1">
    <molecule id="Q8BX46-1"/>
</dbReference>
<dbReference type="CCDS" id="CCDS52829.1">
    <molecule id="Q8BX46-2"/>
</dbReference>
<dbReference type="RefSeq" id="NP_001157227.1">
    <molecule id="Q8BX46-2"/>
    <property type="nucleotide sequence ID" value="NM_001163755.1"/>
</dbReference>
<dbReference type="RefSeq" id="NP_001157229.1">
    <property type="nucleotide sequence ID" value="NM_001163757.1"/>
</dbReference>
<dbReference type="RefSeq" id="NP_766034.2">
    <molecule id="Q8BX46-1"/>
    <property type="nucleotide sequence ID" value="NM_172446.3"/>
</dbReference>
<dbReference type="SMR" id="Q8BX46"/>
<dbReference type="BioGRID" id="228910">
    <property type="interactions" value="5"/>
</dbReference>
<dbReference type="FunCoup" id="Q8BX46">
    <property type="interactions" value="82"/>
</dbReference>
<dbReference type="IntAct" id="Q8BX46">
    <property type="interactions" value="5"/>
</dbReference>
<dbReference type="STRING" id="10090.ENSMUSP00000055037"/>
<dbReference type="GlyGen" id="Q8BX46">
    <property type="glycosylation" value="2 sites, 1 O-linked glycan (1 site)"/>
</dbReference>
<dbReference type="iPTMnet" id="Q8BX46"/>
<dbReference type="PhosphoSitePlus" id="Q8BX46"/>
<dbReference type="SwissPalm" id="Q8BX46"/>
<dbReference type="PaxDb" id="10090-ENSMUSP00000055037"/>
<dbReference type="ProteomicsDB" id="261060">
    <molecule id="Q8BX46-1"/>
</dbReference>
<dbReference type="ProteomicsDB" id="261061">
    <molecule id="Q8BX46-2"/>
</dbReference>
<dbReference type="Antibodypedia" id="50926">
    <property type="antibodies" value="30 antibodies from 12 providers"/>
</dbReference>
<dbReference type="DNASU" id="207667"/>
<dbReference type="Ensembl" id="ENSMUST00000055281.8">
    <molecule id="Q8BX46-1"/>
    <property type="protein sequence ID" value="ENSMUSP00000055037.8"/>
    <property type="gene ID" value="ENSMUSG00000022245.16"/>
</dbReference>
<dbReference type="Ensembl" id="ENSMUST00000119146.8">
    <molecule id="Q8BX46-2"/>
    <property type="protein sequence ID" value="ENSMUSP00000113924.2"/>
    <property type="gene ID" value="ENSMUSG00000022245.16"/>
</dbReference>
<dbReference type="GeneID" id="207667"/>
<dbReference type="KEGG" id="mmu:207667"/>
<dbReference type="UCSC" id="uc009qat.2">
    <molecule id="Q8BX46-1"/>
    <property type="organism name" value="mouse"/>
</dbReference>
<dbReference type="UCSC" id="uc009qau.2">
    <molecule id="Q8BX46-2"/>
    <property type="organism name" value="mouse"/>
</dbReference>
<dbReference type="AGR" id="MGI:2443473"/>
<dbReference type="CTD" id="390598"/>
<dbReference type="MGI" id="MGI:2443473">
    <property type="gene designation" value="Skor1"/>
</dbReference>
<dbReference type="VEuPathDB" id="HostDB:ENSMUSG00000022245"/>
<dbReference type="eggNOG" id="ENOG502QQC2">
    <property type="taxonomic scope" value="Eukaryota"/>
</dbReference>
<dbReference type="GeneTree" id="ENSGT00940000158440"/>
<dbReference type="InParanoid" id="Q8BX46"/>
<dbReference type="OMA" id="YLCTPER"/>
<dbReference type="OrthoDB" id="3938623at2759"/>
<dbReference type="PhylomeDB" id="Q8BX46"/>
<dbReference type="TreeFam" id="TF324133"/>
<dbReference type="BioGRID-ORCS" id="207667">
    <property type="hits" value="1 hit in 78 CRISPR screens"/>
</dbReference>
<dbReference type="PRO" id="PR:Q8BX46"/>
<dbReference type="Proteomes" id="UP000000589">
    <property type="component" value="Chromosome 9"/>
</dbReference>
<dbReference type="RNAct" id="Q8BX46">
    <property type="molecule type" value="protein"/>
</dbReference>
<dbReference type="Bgee" id="ENSMUSG00000022245">
    <property type="expression patterns" value="Expressed in otolith organ and 65 other cell types or tissues"/>
</dbReference>
<dbReference type="ExpressionAtlas" id="Q8BX46">
    <property type="expression patterns" value="baseline and differential"/>
</dbReference>
<dbReference type="GO" id="GO:0030425">
    <property type="term" value="C:dendrite"/>
    <property type="evidence" value="ECO:0007669"/>
    <property type="project" value="Ensembl"/>
</dbReference>
<dbReference type="GO" id="GO:0043025">
    <property type="term" value="C:neuronal cell body"/>
    <property type="evidence" value="ECO:0007669"/>
    <property type="project" value="Ensembl"/>
</dbReference>
<dbReference type="GO" id="GO:0005634">
    <property type="term" value="C:nucleus"/>
    <property type="evidence" value="ECO:0000314"/>
    <property type="project" value="MGI"/>
</dbReference>
<dbReference type="GO" id="GO:0005667">
    <property type="term" value="C:transcription regulator complex"/>
    <property type="evidence" value="ECO:0000314"/>
    <property type="project" value="MGI"/>
</dbReference>
<dbReference type="GO" id="GO:1990837">
    <property type="term" value="F:sequence-specific double-stranded DNA binding"/>
    <property type="evidence" value="ECO:0007669"/>
    <property type="project" value="Ensembl"/>
</dbReference>
<dbReference type="GO" id="GO:0046332">
    <property type="term" value="F:SMAD binding"/>
    <property type="evidence" value="ECO:0007669"/>
    <property type="project" value="Ensembl"/>
</dbReference>
<dbReference type="GO" id="GO:0030514">
    <property type="term" value="P:negative regulation of BMP signaling pathway"/>
    <property type="evidence" value="ECO:0007669"/>
    <property type="project" value="Ensembl"/>
</dbReference>
<dbReference type="GO" id="GO:0045892">
    <property type="term" value="P:negative regulation of DNA-templated transcription"/>
    <property type="evidence" value="ECO:0000314"/>
    <property type="project" value="MGI"/>
</dbReference>
<dbReference type="CDD" id="cd21080">
    <property type="entry name" value="DHD_Skor"/>
    <property type="match status" value="1"/>
</dbReference>
<dbReference type="FunFam" id="3.10.390.10:FF:000001">
    <property type="entry name" value="SKI family transcriptional corepressor 1"/>
    <property type="match status" value="1"/>
</dbReference>
<dbReference type="FunFam" id="3.10.260.20:FF:000003">
    <property type="entry name" value="SKI family transcriptional corepressor 1 homolog-B-like"/>
    <property type="match status" value="1"/>
</dbReference>
<dbReference type="Gene3D" id="3.10.390.10">
    <property type="entry name" value="SAND domain-like"/>
    <property type="match status" value="1"/>
</dbReference>
<dbReference type="Gene3D" id="3.10.260.20">
    <property type="entry name" value="Ski"/>
    <property type="match status" value="1"/>
</dbReference>
<dbReference type="InterPro" id="IPR014890">
    <property type="entry name" value="c-SKI_SMAD4-bd_dom"/>
</dbReference>
<dbReference type="InterPro" id="IPR009061">
    <property type="entry name" value="DNA-bd_dom_put_sf"/>
</dbReference>
<dbReference type="InterPro" id="IPR010919">
    <property type="entry name" value="SAND-like_dom_sf"/>
</dbReference>
<dbReference type="InterPro" id="IPR003380">
    <property type="entry name" value="SKI/SNO/DAC"/>
</dbReference>
<dbReference type="InterPro" id="IPR037000">
    <property type="entry name" value="Ski_DNA-bd_sf"/>
</dbReference>
<dbReference type="InterPro" id="IPR023216">
    <property type="entry name" value="Tscrpt_reg_SKI_SnoN"/>
</dbReference>
<dbReference type="PANTHER" id="PTHR10005:SF8">
    <property type="entry name" value="SKI FAMILY TRANSCRIPTIONAL COREPRESSOR 1"/>
    <property type="match status" value="1"/>
</dbReference>
<dbReference type="PANTHER" id="PTHR10005">
    <property type="entry name" value="SKI ONCOGENE-RELATED"/>
    <property type="match status" value="1"/>
</dbReference>
<dbReference type="Pfam" id="PF08782">
    <property type="entry name" value="c-SKI_SMAD_bind"/>
    <property type="match status" value="1"/>
</dbReference>
<dbReference type="Pfam" id="PF02437">
    <property type="entry name" value="Ski_Sno_DHD"/>
    <property type="match status" value="1"/>
</dbReference>
<dbReference type="SMART" id="SM01046">
    <property type="entry name" value="c-SKI_SMAD_bind"/>
    <property type="match status" value="1"/>
</dbReference>
<dbReference type="SUPFAM" id="SSF46955">
    <property type="entry name" value="Putative DNA-binding domain"/>
    <property type="match status" value="1"/>
</dbReference>
<dbReference type="SUPFAM" id="SSF63763">
    <property type="entry name" value="SAND domain-like"/>
    <property type="match status" value="1"/>
</dbReference>
<keyword id="KW-0025">Alternative splicing</keyword>
<keyword id="KW-0175">Coiled coil</keyword>
<keyword id="KW-0539">Nucleus</keyword>
<keyword id="KW-1185">Reference proteome</keyword>
<keyword id="KW-0678">Repressor</keyword>
<keyword id="KW-0804">Transcription</keyword>
<keyword id="KW-0805">Transcription regulation</keyword>
<proteinExistence type="evidence at protein level"/>
<accession>Q8BX46</accession>
<accession>B2RQS8</accession>
<accession>Q3UYA4</accession>
<accession>Q5W8I2</accession>
<accession>Q8C0T2</accession>
<reference evidence="9 10" key="1">
    <citation type="journal article" date="2005" name="J. Biol. Chem.">
        <title>Corl1, a novel neuronal lineage-specific transcriptional corepressor for the homeodomain transcription factor Lbx1.</title>
        <authorList>
            <person name="Mizuhara E."/>
            <person name="Nakatani T."/>
            <person name="Minaki Y."/>
            <person name="Sakamoto Y."/>
            <person name="Ono Y."/>
        </authorList>
    </citation>
    <scope>NUCLEOTIDE SEQUENCE [MRNA] (ISOFORM 2)</scope>
    <scope>FUNCTION</scope>
    <scope>SUBCELLULAR LOCATION</scope>
    <scope>TISSUE SPECIFICITY</scope>
    <scope>DEVELOPMENTAL STAGE</scope>
    <scope>INTERACTION WITH LBX1</scope>
    <source>
        <tissue evidence="4">Embryonic brain</tissue>
    </source>
</reference>
<reference key="2">
    <citation type="journal article" date="2005" name="Science">
        <title>The transcriptional landscape of the mammalian genome.</title>
        <authorList>
            <person name="Carninci P."/>
            <person name="Kasukawa T."/>
            <person name="Katayama S."/>
            <person name="Gough J."/>
            <person name="Frith M.C."/>
            <person name="Maeda N."/>
            <person name="Oyama R."/>
            <person name="Ravasi T."/>
            <person name="Lenhard B."/>
            <person name="Wells C."/>
            <person name="Kodzius R."/>
            <person name="Shimokawa K."/>
            <person name="Bajic V.B."/>
            <person name="Brenner S.E."/>
            <person name="Batalov S."/>
            <person name="Forrest A.R."/>
            <person name="Zavolan M."/>
            <person name="Davis M.J."/>
            <person name="Wilming L.G."/>
            <person name="Aidinis V."/>
            <person name="Allen J.E."/>
            <person name="Ambesi-Impiombato A."/>
            <person name="Apweiler R."/>
            <person name="Aturaliya R.N."/>
            <person name="Bailey T.L."/>
            <person name="Bansal M."/>
            <person name="Baxter L."/>
            <person name="Beisel K.W."/>
            <person name="Bersano T."/>
            <person name="Bono H."/>
            <person name="Chalk A.M."/>
            <person name="Chiu K.P."/>
            <person name="Choudhary V."/>
            <person name="Christoffels A."/>
            <person name="Clutterbuck D.R."/>
            <person name="Crowe M.L."/>
            <person name="Dalla E."/>
            <person name="Dalrymple B.P."/>
            <person name="de Bono B."/>
            <person name="Della Gatta G."/>
            <person name="di Bernardo D."/>
            <person name="Down T."/>
            <person name="Engstrom P."/>
            <person name="Fagiolini M."/>
            <person name="Faulkner G."/>
            <person name="Fletcher C.F."/>
            <person name="Fukushima T."/>
            <person name="Furuno M."/>
            <person name="Futaki S."/>
            <person name="Gariboldi M."/>
            <person name="Georgii-Hemming P."/>
            <person name="Gingeras T.R."/>
            <person name="Gojobori T."/>
            <person name="Green R.E."/>
            <person name="Gustincich S."/>
            <person name="Harbers M."/>
            <person name="Hayashi Y."/>
            <person name="Hensch T.K."/>
            <person name="Hirokawa N."/>
            <person name="Hill D."/>
            <person name="Huminiecki L."/>
            <person name="Iacono M."/>
            <person name="Ikeo K."/>
            <person name="Iwama A."/>
            <person name="Ishikawa T."/>
            <person name="Jakt M."/>
            <person name="Kanapin A."/>
            <person name="Katoh M."/>
            <person name="Kawasawa Y."/>
            <person name="Kelso J."/>
            <person name="Kitamura H."/>
            <person name="Kitano H."/>
            <person name="Kollias G."/>
            <person name="Krishnan S.P."/>
            <person name="Kruger A."/>
            <person name="Kummerfeld S.K."/>
            <person name="Kurochkin I.V."/>
            <person name="Lareau L.F."/>
            <person name="Lazarevic D."/>
            <person name="Lipovich L."/>
            <person name="Liu J."/>
            <person name="Liuni S."/>
            <person name="McWilliam S."/>
            <person name="Madan Babu M."/>
            <person name="Madera M."/>
            <person name="Marchionni L."/>
            <person name="Matsuda H."/>
            <person name="Matsuzawa S."/>
            <person name="Miki H."/>
            <person name="Mignone F."/>
            <person name="Miyake S."/>
            <person name="Morris K."/>
            <person name="Mottagui-Tabar S."/>
            <person name="Mulder N."/>
            <person name="Nakano N."/>
            <person name="Nakauchi H."/>
            <person name="Ng P."/>
            <person name="Nilsson R."/>
            <person name="Nishiguchi S."/>
            <person name="Nishikawa S."/>
            <person name="Nori F."/>
            <person name="Ohara O."/>
            <person name="Okazaki Y."/>
            <person name="Orlando V."/>
            <person name="Pang K.C."/>
            <person name="Pavan W.J."/>
            <person name="Pavesi G."/>
            <person name="Pesole G."/>
            <person name="Petrovsky N."/>
            <person name="Piazza S."/>
            <person name="Reed J."/>
            <person name="Reid J.F."/>
            <person name="Ring B.Z."/>
            <person name="Ringwald M."/>
            <person name="Rost B."/>
            <person name="Ruan Y."/>
            <person name="Salzberg S.L."/>
            <person name="Sandelin A."/>
            <person name="Schneider C."/>
            <person name="Schoenbach C."/>
            <person name="Sekiguchi K."/>
            <person name="Semple C.A."/>
            <person name="Seno S."/>
            <person name="Sessa L."/>
            <person name="Sheng Y."/>
            <person name="Shibata Y."/>
            <person name="Shimada H."/>
            <person name="Shimada K."/>
            <person name="Silva D."/>
            <person name="Sinclair B."/>
            <person name="Sperling S."/>
            <person name="Stupka E."/>
            <person name="Sugiura K."/>
            <person name="Sultana R."/>
            <person name="Takenaka Y."/>
            <person name="Taki K."/>
            <person name="Tammoja K."/>
            <person name="Tan S.L."/>
            <person name="Tang S."/>
            <person name="Taylor M.S."/>
            <person name="Tegner J."/>
            <person name="Teichmann S.A."/>
            <person name="Ueda H.R."/>
            <person name="van Nimwegen E."/>
            <person name="Verardo R."/>
            <person name="Wei C.L."/>
            <person name="Yagi K."/>
            <person name="Yamanishi H."/>
            <person name="Zabarovsky E."/>
            <person name="Zhu S."/>
            <person name="Zimmer A."/>
            <person name="Hide W."/>
            <person name="Bult C."/>
            <person name="Grimmond S.M."/>
            <person name="Teasdale R.D."/>
            <person name="Liu E.T."/>
            <person name="Brusic V."/>
            <person name="Quackenbush J."/>
            <person name="Wahlestedt C."/>
            <person name="Mattick J.S."/>
            <person name="Hume D.A."/>
            <person name="Kai C."/>
            <person name="Sasaki D."/>
            <person name="Tomaru Y."/>
            <person name="Fukuda S."/>
            <person name="Kanamori-Katayama M."/>
            <person name="Suzuki M."/>
            <person name="Aoki J."/>
            <person name="Arakawa T."/>
            <person name="Iida J."/>
            <person name="Imamura K."/>
            <person name="Itoh M."/>
            <person name="Kato T."/>
            <person name="Kawaji H."/>
            <person name="Kawagashira N."/>
            <person name="Kawashima T."/>
            <person name="Kojima M."/>
            <person name="Kondo S."/>
            <person name="Konno H."/>
            <person name="Nakano K."/>
            <person name="Ninomiya N."/>
            <person name="Nishio T."/>
            <person name="Okada M."/>
            <person name="Plessy C."/>
            <person name="Shibata K."/>
            <person name="Shiraki T."/>
            <person name="Suzuki S."/>
            <person name="Tagami M."/>
            <person name="Waki K."/>
            <person name="Watahiki A."/>
            <person name="Okamura-Oho Y."/>
            <person name="Suzuki H."/>
            <person name="Kawai J."/>
            <person name="Hayashizaki Y."/>
        </authorList>
    </citation>
    <scope>NUCLEOTIDE SEQUENCE [LARGE SCALE MRNA] (ISOFORMS 1 AND 2)</scope>
    <source>
        <strain>C57BL/6J</strain>
        <tissue>Cerebellum</tissue>
        <tissue>Medulla oblongata</tissue>
    </source>
</reference>
<reference key="3">
    <citation type="journal article" date="2004" name="Genome Res.">
        <title>The status, quality, and expansion of the NIH full-length cDNA project: the Mammalian Gene Collection (MGC).</title>
        <authorList>
            <consortium name="The MGC Project Team"/>
        </authorList>
    </citation>
    <scope>NUCLEOTIDE SEQUENCE [LARGE SCALE MRNA] (ISOFORM 2)</scope>
    <source>
        <tissue>Brain</tissue>
    </source>
</reference>
<reference key="4">
    <citation type="journal article" date="2007" name="Mol. Cell. Neurosci.">
        <title>Fussel-15, a novel Ski/Sno homolog protein, antagonizes BMP signaling.</title>
        <authorList>
            <person name="Arndt S."/>
            <person name="Poser I."/>
            <person name="Moser M."/>
            <person name="Bosserhoff A.-K."/>
        </authorList>
    </citation>
    <scope>DEVELOPMENTAL STAGE</scope>
    <scope>TISSUE SPECIFICITY</scope>
</reference>
<organism>
    <name type="scientific">Mus musculus</name>
    <name type="common">Mouse</name>
    <dbReference type="NCBI Taxonomy" id="10090"/>
    <lineage>
        <taxon>Eukaryota</taxon>
        <taxon>Metazoa</taxon>
        <taxon>Chordata</taxon>
        <taxon>Craniata</taxon>
        <taxon>Vertebrata</taxon>
        <taxon>Euteleostomi</taxon>
        <taxon>Mammalia</taxon>
        <taxon>Eutheria</taxon>
        <taxon>Euarchontoglires</taxon>
        <taxon>Glires</taxon>
        <taxon>Rodentia</taxon>
        <taxon>Myomorpha</taxon>
        <taxon>Muroidea</taxon>
        <taxon>Muridae</taxon>
        <taxon>Murinae</taxon>
        <taxon>Mus</taxon>
        <taxon>Mus</taxon>
    </lineage>
</organism>